<organism>
    <name type="scientific">Chromohalobacter salexigens (strain ATCC BAA-138 / DSM 3043 / CIP 106854 / NCIMB 13768 / 1H11)</name>
    <dbReference type="NCBI Taxonomy" id="290398"/>
    <lineage>
        <taxon>Bacteria</taxon>
        <taxon>Pseudomonadati</taxon>
        <taxon>Pseudomonadota</taxon>
        <taxon>Gammaproteobacteria</taxon>
        <taxon>Oceanospirillales</taxon>
        <taxon>Halomonadaceae</taxon>
        <taxon>Chromohalobacter</taxon>
    </lineage>
</organism>
<name>UVRC_CHRSD</name>
<dbReference type="EMBL" id="CP000285">
    <property type="protein sequence ID" value="ABE59484.1"/>
    <property type="molecule type" value="Genomic_DNA"/>
</dbReference>
<dbReference type="RefSeq" id="WP_011507430.1">
    <property type="nucleotide sequence ID" value="NC_007963.1"/>
</dbReference>
<dbReference type="SMR" id="Q1QVM4"/>
<dbReference type="STRING" id="290398.Csal_2133"/>
<dbReference type="GeneID" id="95334849"/>
<dbReference type="KEGG" id="csa:Csal_2133"/>
<dbReference type="eggNOG" id="COG0322">
    <property type="taxonomic scope" value="Bacteria"/>
</dbReference>
<dbReference type="HOGENOM" id="CLU_014841_3_0_6"/>
<dbReference type="OrthoDB" id="9804933at2"/>
<dbReference type="Proteomes" id="UP000000239">
    <property type="component" value="Chromosome"/>
</dbReference>
<dbReference type="GO" id="GO:0005737">
    <property type="term" value="C:cytoplasm"/>
    <property type="evidence" value="ECO:0007669"/>
    <property type="project" value="UniProtKB-SubCell"/>
</dbReference>
<dbReference type="GO" id="GO:0009380">
    <property type="term" value="C:excinuclease repair complex"/>
    <property type="evidence" value="ECO:0007669"/>
    <property type="project" value="InterPro"/>
</dbReference>
<dbReference type="GO" id="GO:0003677">
    <property type="term" value="F:DNA binding"/>
    <property type="evidence" value="ECO:0007669"/>
    <property type="project" value="UniProtKB-UniRule"/>
</dbReference>
<dbReference type="GO" id="GO:0009381">
    <property type="term" value="F:excinuclease ABC activity"/>
    <property type="evidence" value="ECO:0007669"/>
    <property type="project" value="UniProtKB-UniRule"/>
</dbReference>
<dbReference type="GO" id="GO:0006289">
    <property type="term" value="P:nucleotide-excision repair"/>
    <property type="evidence" value="ECO:0007669"/>
    <property type="project" value="UniProtKB-UniRule"/>
</dbReference>
<dbReference type="GO" id="GO:0009432">
    <property type="term" value="P:SOS response"/>
    <property type="evidence" value="ECO:0007669"/>
    <property type="project" value="UniProtKB-UniRule"/>
</dbReference>
<dbReference type="CDD" id="cd10434">
    <property type="entry name" value="GIY-YIG_UvrC_Cho"/>
    <property type="match status" value="1"/>
</dbReference>
<dbReference type="FunFam" id="1.10.150.20:FF:000005">
    <property type="entry name" value="UvrABC system protein C"/>
    <property type="match status" value="1"/>
</dbReference>
<dbReference type="FunFam" id="3.30.420.340:FF:000001">
    <property type="entry name" value="UvrABC system protein C"/>
    <property type="match status" value="1"/>
</dbReference>
<dbReference type="FunFam" id="3.40.1440.10:FF:000001">
    <property type="entry name" value="UvrABC system protein C"/>
    <property type="match status" value="1"/>
</dbReference>
<dbReference type="FunFam" id="4.10.860.10:FF:000002">
    <property type="entry name" value="UvrABC system protein C"/>
    <property type="match status" value="1"/>
</dbReference>
<dbReference type="Gene3D" id="1.10.150.20">
    <property type="entry name" value="5' to 3' exonuclease, C-terminal subdomain"/>
    <property type="match status" value="1"/>
</dbReference>
<dbReference type="Gene3D" id="3.40.1440.10">
    <property type="entry name" value="GIY-YIG endonuclease"/>
    <property type="match status" value="1"/>
</dbReference>
<dbReference type="Gene3D" id="4.10.860.10">
    <property type="entry name" value="UVR domain"/>
    <property type="match status" value="1"/>
</dbReference>
<dbReference type="Gene3D" id="3.30.420.340">
    <property type="entry name" value="UvrC, RNAse H endonuclease domain"/>
    <property type="match status" value="1"/>
</dbReference>
<dbReference type="HAMAP" id="MF_00203">
    <property type="entry name" value="UvrC"/>
    <property type="match status" value="1"/>
</dbReference>
<dbReference type="InterPro" id="IPR000305">
    <property type="entry name" value="GIY-YIG_endonuc"/>
</dbReference>
<dbReference type="InterPro" id="IPR035901">
    <property type="entry name" value="GIY-YIG_endonuc_sf"/>
</dbReference>
<dbReference type="InterPro" id="IPR047296">
    <property type="entry name" value="GIY-YIG_UvrC_Cho"/>
</dbReference>
<dbReference type="InterPro" id="IPR003583">
    <property type="entry name" value="Hlx-hairpin-Hlx_DNA-bd_motif"/>
</dbReference>
<dbReference type="InterPro" id="IPR010994">
    <property type="entry name" value="RuvA_2-like"/>
</dbReference>
<dbReference type="InterPro" id="IPR001943">
    <property type="entry name" value="UVR_dom"/>
</dbReference>
<dbReference type="InterPro" id="IPR036876">
    <property type="entry name" value="UVR_dom_sf"/>
</dbReference>
<dbReference type="InterPro" id="IPR050066">
    <property type="entry name" value="UvrABC_protein_C"/>
</dbReference>
<dbReference type="InterPro" id="IPR004791">
    <property type="entry name" value="UvrC"/>
</dbReference>
<dbReference type="InterPro" id="IPR001162">
    <property type="entry name" value="UvrC_RNase_H_dom"/>
</dbReference>
<dbReference type="InterPro" id="IPR038476">
    <property type="entry name" value="UvrC_RNase_H_dom_sf"/>
</dbReference>
<dbReference type="NCBIfam" id="NF001824">
    <property type="entry name" value="PRK00558.1-5"/>
    <property type="match status" value="1"/>
</dbReference>
<dbReference type="NCBIfam" id="TIGR00194">
    <property type="entry name" value="uvrC"/>
    <property type="match status" value="1"/>
</dbReference>
<dbReference type="PANTHER" id="PTHR30562:SF1">
    <property type="entry name" value="UVRABC SYSTEM PROTEIN C"/>
    <property type="match status" value="1"/>
</dbReference>
<dbReference type="PANTHER" id="PTHR30562">
    <property type="entry name" value="UVRC/OXIDOREDUCTASE"/>
    <property type="match status" value="1"/>
</dbReference>
<dbReference type="Pfam" id="PF01541">
    <property type="entry name" value="GIY-YIG"/>
    <property type="match status" value="1"/>
</dbReference>
<dbReference type="Pfam" id="PF14520">
    <property type="entry name" value="HHH_5"/>
    <property type="match status" value="1"/>
</dbReference>
<dbReference type="Pfam" id="PF02151">
    <property type="entry name" value="UVR"/>
    <property type="match status" value="1"/>
</dbReference>
<dbReference type="Pfam" id="PF22920">
    <property type="entry name" value="UvrC_RNaseH"/>
    <property type="match status" value="1"/>
</dbReference>
<dbReference type="Pfam" id="PF08459">
    <property type="entry name" value="UvrC_RNaseH_dom"/>
    <property type="match status" value="1"/>
</dbReference>
<dbReference type="SMART" id="SM00465">
    <property type="entry name" value="GIYc"/>
    <property type="match status" value="1"/>
</dbReference>
<dbReference type="SMART" id="SM00278">
    <property type="entry name" value="HhH1"/>
    <property type="match status" value="2"/>
</dbReference>
<dbReference type="SUPFAM" id="SSF46600">
    <property type="entry name" value="C-terminal UvrC-binding domain of UvrB"/>
    <property type="match status" value="1"/>
</dbReference>
<dbReference type="SUPFAM" id="SSF82771">
    <property type="entry name" value="GIY-YIG endonuclease"/>
    <property type="match status" value="1"/>
</dbReference>
<dbReference type="SUPFAM" id="SSF47781">
    <property type="entry name" value="RuvA domain 2-like"/>
    <property type="match status" value="1"/>
</dbReference>
<dbReference type="PROSITE" id="PS50164">
    <property type="entry name" value="GIY_YIG"/>
    <property type="match status" value="1"/>
</dbReference>
<dbReference type="PROSITE" id="PS50151">
    <property type="entry name" value="UVR"/>
    <property type="match status" value="1"/>
</dbReference>
<dbReference type="PROSITE" id="PS50165">
    <property type="entry name" value="UVRC"/>
    <property type="match status" value="1"/>
</dbReference>
<reference key="1">
    <citation type="journal article" date="2011" name="Stand. Genomic Sci.">
        <title>Complete genome sequence of the halophilic and highly halotolerant Chromohalobacter salexigens type strain (1H11(T)).</title>
        <authorList>
            <person name="Copeland A."/>
            <person name="O'Connor K."/>
            <person name="Lucas S."/>
            <person name="Lapidus A."/>
            <person name="Berry K.W."/>
            <person name="Detter J.C."/>
            <person name="Del Rio T.G."/>
            <person name="Hammon N."/>
            <person name="Dalin E."/>
            <person name="Tice H."/>
            <person name="Pitluck S."/>
            <person name="Bruce D."/>
            <person name="Goodwin L."/>
            <person name="Han C."/>
            <person name="Tapia R."/>
            <person name="Saunders E."/>
            <person name="Schmutz J."/>
            <person name="Brettin T."/>
            <person name="Larimer F."/>
            <person name="Land M."/>
            <person name="Hauser L."/>
            <person name="Vargas C."/>
            <person name="Nieto J.J."/>
            <person name="Kyrpides N.C."/>
            <person name="Ivanova N."/>
            <person name="Goker M."/>
            <person name="Klenk H.P."/>
            <person name="Csonka L.N."/>
            <person name="Woyke T."/>
        </authorList>
    </citation>
    <scope>NUCLEOTIDE SEQUENCE [LARGE SCALE GENOMIC DNA]</scope>
    <source>
        <strain>ATCC BAA-138 / DSM 3043 / CIP 106854 / NCIMB 13768 / 1H11</strain>
    </source>
</reference>
<evidence type="ECO:0000255" key="1">
    <source>
        <dbReference type="HAMAP-Rule" id="MF_00203"/>
    </source>
</evidence>
<evidence type="ECO:0000256" key="2">
    <source>
        <dbReference type="SAM" id="MobiDB-lite"/>
    </source>
</evidence>
<protein>
    <recommendedName>
        <fullName evidence="1">UvrABC system protein C</fullName>
        <shortName evidence="1">Protein UvrC</shortName>
    </recommendedName>
    <alternativeName>
        <fullName evidence="1">Excinuclease ABC subunit C</fullName>
    </alternativeName>
</protein>
<gene>
    <name evidence="1" type="primary">uvrC</name>
    <name type="ordered locus">Csal_2133</name>
</gene>
<proteinExistence type="inferred from homology"/>
<feature type="chain" id="PRO_0000264883" description="UvrABC system protein C">
    <location>
        <begin position="1"/>
        <end position="604"/>
    </location>
</feature>
<feature type="domain" description="GIY-YIG" evidence="1">
    <location>
        <begin position="14"/>
        <end position="91"/>
    </location>
</feature>
<feature type="domain" description="UVR" evidence="1">
    <location>
        <begin position="202"/>
        <end position="237"/>
    </location>
</feature>
<feature type="region of interest" description="Disordered" evidence="2">
    <location>
        <begin position="538"/>
        <end position="557"/>
    </location>
</feature>
<sequence>MSFDAKHFLKTVSESPGVYRMLDAEGNVLYVGKAKRLKARLASYFRGALNAKTQALVSRIEDIQVTITRTETEALLLEQTLIKEQRPPYNILLRDDKSYPFIFVSDRHPYPALEFKRARQKRGDGRYLGPFPSTTAVRESLSLMQKIFRIRNCEDSVFAHRTRPCLQYQIQRCSAPCVDYIGREEYQRDIDHAIMCLEGRSEQVTAQLTRDMETASQALDFEEAARLRDQIQQLRRLQERQIVDTGDGDADIFALAERPGGLCISALAVRGGRMLGARHHMPQNGLDLTAEALLGEFISHYYLGHEREIPAEVITALPLADSDVIQAALSERAGKRIRLAHQVRGHRAQWLRLAETNAEQHLTTQLANRSQLAKRFASLRDAMQLQETPTRLECFDISHSHGEATVASCVVFDQDGPVKSDYRRFNIEGVAAGDDYAAMRQALTRRYKRLTQDDSKLPGILIVDGGKGQLNMAREVLEDVGITGTHLLGVAKGTTRKPGLETLFLETVDNSLALDSASPGLHLIQHIRDEAHRFAITGHRQQRDKQRRTSTLQDIPGIGPKRRRELLRFFGGLQGVRQASRDELARVPGISAQMATTIHQALHG</sequence>
<keyword id="KW-0963">Cytoplasm</keyword>
<keyword id="KW-0227">DNA damage</keyword>
<keyword id="KW-0228">DNA excision</keyword>
<keyword id="KW-0234">DNA repair</keyword>
<keyword id="KW-0267">Excision nuclease</keyword>
<keyword id="KW-1185">Reference proteome</keyword>
<keyword id="KW-0742">SOS response</keyword>
<accession>Q1QVM4</accession>
<comment type="function">
    <text evidence="1">The UvrABC repair system catalyzes the recognition and processing of DNA lesions. UvrC both incises the 5' and 3' sides of the lesion. The N-terminal half is responsible for the 3' incision and the C-terminal half is responsible for the 5' incision.</text>
</comment>
<comment type="subunit">
    <text evidence="1">Interacts with UvrB in an incision complex.</text>
</comment>
<comment type="subcellular location">
    <subcellularLocation>
        <location evidence="1">Cytoplasm</location>
    </subcellularLocation>
</comment>
<comment type="similarity">
    <text evidence="1">Belongs to the UvrC family.</text>
</comment>